<reference key="1">
    <citation type="journal article" date="2010" name="Genome Biol.">
        <title>Structure and dynamics of the pan-genome of Streptococcus pneumoniae and closely related species.</title>
        <authorList>
            <person name="Donati C."/>
            <person name="Hiller N.L."/>
            <person name="Tettelin H."/>
            <person name="Muzzi A."/>
            <person name="Croucher N.J."/>
            <person name="Angiuoli S.V."/>
            <person name="Oggioni M."/>
            <person name="Dunning Hotopp J.C."/>
            <person name="Hu F.Z."/>
            <person name="Riley D.R."/>
            <person name="Covacci A."/>
            <person name="Mitchell T.J."/>
            <person name="Bentley S.D."/>
            <person name="Kilian M."/>
            <person name="Ehrlich G.D."/>
            <person name="Rappuoli R."/>
            <person name="Moxon E.R."/>
            <person name="Masignani V."/>
        </authorList>
    </citation>
    <scope>NUCLEOTIDE SEQUENCE [LARGE SCALE GENOMIC DNA]</scope>
    <source>
        <strain>P1031</strain>
    </source>
</reference>
<organism>
    <name type="scientific">Streptococcus pneumoniae (strain P1031)</name>
    <dbReference type="NCBI Taxonomy" id="488223"/>
    <lineage>
        <taxon>Bacteria</taxon>
        <taxon>Bacillati</taxon>
        <taxon>Bacillota</taxon>
        <taxon>Bacilli</taxon>
        <taxon>Lactobacillales</taxon>
        <taxon>Streptococcaceae</taxon>
        <taxon>Streptococcus</taxon>
    </lineage>
</organism>
<comment type="function">
    <text evidence="2">One of the essential components for the initiation of protein synthesis. Protects formylmethionyl-tRNA from spontaneous hydrolysis and promotes its binding to the 30S ribosomal subunits. Also involved in the hydrolysis of GTP during the formation of the 70S ribosomal complex.</text>
</comment>
<comment type="subcellular location">
    <subcellularLocation>
        <location evidence="2">Cytoplasm</location>
    </subcellularLocation>
</comment>
<comment type="similarity">
    <text evidence="2">Belongs to the TRAFAC class translation factor GTPase superfamily. Classic translation factor GTPase family. IF-2 subfamily.</text>
</comment>
<name>IF2_STRZP</name>
<keyword id="KW-0963">Cytoplasm</keyword>
<keyword id="KW-0342">GTP-binding</keyword>
<keyword id="KW-0396">Initiation factor</keyword>
<keyword id="KW-0547">Nucleotide-binding</keyword>
<keyword id="KW-0648">Protein biosynthesis</keyword>
<gene>
    <name evidence="2" type="primary">infB</name>
    <name type="ordered locus">SPP_0573</name>
</gene>
<dbReference type="EMBL" id="CP000920">
    <property type="protein sequence ID" value="ACO20362.1"/>
    <property type="molecule type" value="Genomic_DNA"/>
</dbReference>
<dbReference type="RefSeq" id="WP_000039205.1">
    <property type="nucleotide sequence ID" value="NC_012467.1"/>
</dbReference>
<dbReference type="SMR" id="C1CJ39"/>
<dbReference type="GeneID" id="45654026"/>
<dbReference type="KEGG" id="spp:SPP_0573"/>
<dbReference type="HOGENOM" id="CLU_006301_5_0_9"/>
<dbReference type="GO" id="GO:0005829">
    <property type="term" value="C:cytosol"/>
    <property type="evidence" value="ECO:0007669"/>
    <property type="project" value="TreeGrafter"/>
</dbReference>
<dbReference type="GO" id="GO:0005525">
    <property type="term" value="F:GTP binding"/>
    <property type="evidence" value="ECO:0007669"/>
    <property type="project" value="UniProtKB-KW"/>
</dbReference>
<dbReference type="GO" id="GO:0003924">
    <property type="term" value="F:GTPase activity"/>
    <property type="evidence" value="ECO:0007669"/>
    <property type="project" value="UniProtKB-UniRule"/>
</dbReference>
<dbReference type="GO" id="GO:0003743">
    <property type="term" value="F:translation initiation factor activity"/>
    <property type="evidence" value="ECO:0007669"/>
    <property type="project" value="UniProtKB-UniRule"/>
</dbReference>
<dbReference type="CDD" id="cd01887">
    <property type="entry name" value="IF2_eIF5B"/>
    <property type="match status" value="1"/>
</dbReference>
<dbReference type="CDD" id="cd03702">
    <property type="entry name" value="IF2_mtIF2_II"/>
    <property type="match status" value="1"/>
</dbReference>
<dbReference type="CDD" id="cd03692">
    <property type="entry name" value="mtIF2_IVc"/>
    <property type="match status" value="1"/>
</dbReference>
<dbReference type="FunFam" id="1.10.10.2480:FF:000003">
    <property type="entry name" value="Translation initiation factor IF-2"/>
    <property type="match status" value="1"/>
</dbReference>
<dbReference type="FunFam" id="2.40.30.10:FF:000007">
    <property type="entry name" value="Translation initiation factor IF-2"/>
    <property type="match status" value="1"/>
</dbReference>
<dbReference type="FunFam" id="2.40.30.10:FF:000008">
    <property type="entry name" value="Translation initiation factor IF-2"/>
    <property type="match status" value="1"/>
</dbReference>
<dbReference type="FunFam" id="3.40.50.10050:FF:000001">
    <property type="entry name" value="Translation initiation factor IF-2"/>
    <property type="match status" value="1"/>
</dbReference>
<dbReference type="FunFam" id="3.40.50.300:FF:000019">
    <property type="entry name" value="Translation initiation factor IF-2"/>
    <property type="match status" value="1"/>
</dbReference>
<dbReference type="Gene3D" id="1.10.10.2480">
    <property type="match status" value="1"/>
</dbReference>
<dbReference type="Gene3D" id="3.40.50.300">
    <property type="entry name" value="P-loop containing nucleotide triphosphate hydrolases"/>
    <property type="match status" value="1"/>
</dbReference>
<dbReference type="Gene3D" id="2.40.30.10">
    <property type="entry name" value="Translation factors"/>
    <property type="match status" value="2"/>
</dbReference>
<dbReference type="Gene3D" id="3.40.50.10050">
    <property type="entry name" value="Translation initiation factor IF- 2, domain 3"/>
    <property type="match status" value="1"/>
</dbReference>
<dbReference type="HAMAP" id="MF_00100_B">
    <property type="entry name" value="IF_2_B"/>
    <property type="match status" value="1"/>
</dbReference>
<dbReference type="InterPro" id="IPR053905">
    <property type="entry name" value="EF-G-like_DII"/>
</dbReference>
<dbReference type="InterPro" id="IPR044145">
    <property type="entry name" value="IF2_II"/>
</dbReference>
<dbReference type="InterPro" id="IPR006847">
    <property type="entry name" value="IF2_N"/>
</dbReference>
<dbReference type="InterPro" id="IPR027417">
    <property type="entry name" value="P-loop_NTPase"/>
</dbReference>
<dbReference type="InterPro" id="IPR005225">
    <property type="entry name" value="Small_GTP-bd"/>
</dbReference>
<dbReference type="InterPro" id="IPR000795">
    <property type="entry name" value="T_Tr_GTP-bd_dom"/>
</dbReference>
<dbReference type="InterPro" id="IPR000178">
    <property type="entry name" value="TF_IF2_bacterial-like"/>
</dbReference>
<dbReference type="InterPro" id="IPR015760">
    <property type="entry name" value="TIF_IF2"/>
</dbReference>
<dbReference type="InterPro" id="IPR023115">
    <property type="entry name" value="TIF_IF2_dom3"/>
</dbReference>
<dbReference type="InterPro" id="IPR036925">
    <property type="entry name" value="TIF_IF2_dom3_sf"/>
</dbReference>
<dbReference type="InterPro" id="IPR009000">
    <property type="entry name" value="Transl_B-barrel_sf"/>
</dbReference>
<dbReference type="NCBIfam" id="TIGR00487">
    <property type="entry name" value="IF-2"/>
    <property type="match status" value="1"/>
</dbReference>
<dbReference type="NCBIfam" id="TIGR00231">
    <property type="entry name" value="small_GTP"/>
    <property type="match status" value="1"/>
</dbReference>
<dbReference type="PANTHER" id="PTHR43381:SF5">
    <property type="entry name" value="TR-TYPE G DOMAIN-CONTAINING PROTEIN"/>
    <property type="match status" value="1"/>
</dbReference>
<dbReference type="PANTHER" id="PTHR43381">
    <property type="entry name" value="TRANSLATION INITIATION FACTOR IF-2-RELATED"/>
    <property type="match status" value="1"/>
</dbReference>
<dbReference type="Pfam" id="PF22042">
    <property type="entry name" value="EF-G_D2"/>
    <property type="match status" value="1"/>
</dbReference>
<dbReference type="Pfam" id="PF00009">
    <property type="entry name" value="GTP_EFTU"/>
    <property type="match status" value="1"/>
</dbReference>
<dbReference type="Pfam" id="PF11987">
    <property type="entry name" value="IF-2"/>
    <property type="match status" value="1"/>
</dbReference>
<dbReference type="Pfam" id="PF04760">
    <property type="entry name" value="IF2_N"/>
    <property type="match status" value="2"/>
</dbReference>
<dbReference type="SUPFAM" id="SSF52156">
    <property type="entry name" value="Initiation factor IF2/eIF5b, domain 3"/>
    <property type="match status" value="1"/>
</dbReference>
<dbReference type="SUPFAM" id="SSF52540">
    <property type="entry name" value="P-loop containing nucleoside triphosphate hydrolases"/>
    <property type="match status" value="1"/>
</dbReference>
<dbReference type="SUPFAM" id="SSF50447">
    <property type="entry name" value="Translation proteins"/>
    <property type="match status" value="2"/>
</dbReference>
<dbReference type="PROSITE" id="PS51722">
    <property type="entry name" value="G_TR_2"/>
    <property type="match status" value="1"/>
</dbReference>
<dbReference type="PROSITE" id="PS01176">
    <property type="entry name" value="IF2"/>
    <property type="match status" value="1"/>
</dbReference>
<proteinExistence type="inferred from homology"/>
<evidence type="ECO:0000250" key="1"/>
<evidence type="ECO:0000255" key="2">
    <source>
        <dbReference type="HAMAP-Rule" id="MF_00100"/>
    </source>
</evidence>
<evidence type="ECO:0000256" key="3">
    <source>
        <dbReference type="SAM" id="MobiDB-lite"/>
    </source>
</evidence>
<protein>
    <recommendedName>
        <fullName evidence="2">Translation initiation factor IF-2</fullName>
    </recommendedName>
</protein>
<feature type="chain" id="PRO_1000190638" description="Translation initiation factor IF-2">
    <location>
        <begin position="1"/>
        <end position="930"/>
    </location>
</feature>
<feature type="domain" description="tr-type G">
    <location>
        <begin position="432"/>
        <end position="599"/>
    </location>
</feature>
<feature type="region of interest" description="Disordered" evidence="3">
    <location>
        <begin position="50"/>
        <end position="217"/>
    </location>
</feature>
<feature type="region of interest" description="Disordered" evidence="3">
    <location>
        <begin position="260"/>
        <end position="346"/>
    </location>
</feature>
<feature type="region of interest" description="G1" evidence="1">
    <location>
        <begin position="441"/>
        <end position="448"/>
    </location>
</feature>
<feature type="region of interest" description="G2" evidence="1">
    <location>
        <begin position="466"/>
        <end position="470"/>
    </location>
</feature>
<feature type="region of interest" description="G3" evidence="1">
    <location>
        <begin position="487"/>
        <end position="490"/>
    </location>
</feature>
<feature type="region of interest" description="G4" evidence="1">
    <location>
        <begin position="541"/>
        <end position="544"/>
    </location>
</feature>
<feature type="region of interest" description="G5" evidence="1">
    <location>
        <begin position="577"/>
        <end position="579"/>
    </location>
</feature>
<feature type="compositionally biased region" description="Low complexity" evidence="3">
    <location>
        <begin position="50"/>
        <end position="67"/>
    </location>
</feature>
<feature type="compositionally biased region" description="Basic and acidic residues" evidence="3">
    <location>
        <begin position="68"/>
        <end position="90"/>
    </location>
</feature>
<feature type="compositionally biased region" description="Basic and acidic residues" evidence="3">
    <location>
        <begin position="110"/>
        <end position="125"/>
    </location>
</feature>
<feature type="compositionally biased region" description="Low complexity" evidence="3">
    <location>
        <begin position="129"/>
        <end position="141"/>
    </location>
</feature>
<feature type="compositionally biased region" description="Basic and acidic residues" evidence="3">
    <location>
        <begin position="157"/>
        <end position="167"/>
    </location>
</feature>
<feature type="compositionally biased region" description="Basic and acidic residues" evidence="3">
    <location>
        <begin position="262"/>
        <end position="295"/>
    </location>
</feature>
<feature type="compositionally biased region" description="Low complexity" evidence="3">
    <location>
        <begin position="309"/>
        <end position="318"/>
    </location>
</feature>
<feature type="compositionally biased region" description="Basic and acidic residues" evidence="3">
    <location>
        <begin position="337"/>
        <end position="346"/>
    </location>
</feature>
<feature type="binding site" evidence="2">
    <location>
        <begin position="441"/>
        <end position="448"/>
    </location>
    <ligand>
        <name>GTP</name>
        <dbReference type="ChEBI" id="CHEBI:37565"/>
    </ligand>
</feature>
<feature type="binding site" evidence="2">
    <location>
        <begin position="487"/>
        <end position="491"/>
    </location>
    <ligand>
        <name>GTP</name>
        <dbReference type="ChEBI" id="CHEBI:37565"/>
    </ligand>
</feature>
<feature type="binding site" evidence="2">
    <location>
        <begin position="541"/>
        <end position="544"/>
    </location>
    <ligand>
        <name>GTP</name>
        <dbReference type="ChEBI" id="CHEBI:37565"/>
    </ligand>
</feature>
<sequence length="930" mass="102981">MSKKRLYEIAKELGKESKEVVARAKELGLDVKSHSSSVEEAVAAKIAASFKPAAAPKVEAKPAAPKVSAEKKAEKSEPAKPAVAKEEAKPAEPVAPKTEKVAAKPQSRNFKAEREARAKEQAERRKQNKGNNRDQQQNGNRQKNDGRNGGKQGQSNRDNRRFNDQAKKQQGQQKRRNERRQQEDKRSNQVAPRIDFKARAAALKAEQNAEYARSSEERFKQYQAAKEALAQANKRKEPEEIFEEAAKLAEQAQQVQAVVEVVPEKKEPAVDTRRKKQARPDKNRDDYDHEEDGPRKQQKNRSSQNQVRNQKNSNWNNNKKNKKGNNKNNRNQTPKPVTERKFHELPTEFEYTDGMTVAEIAKRIKREPAEIVKKLFMMGVMATQNQSLDGETIELLMVDYGIEAKQKVEVDNADIERFFVEDGYLNEDELVERPPVVTIMGHVDHGKTTLLDTLRNSRVATGEAGGITQHIGAYQIVENGKKITFLDTPGHAAFTSMRARGASVTDITILVVAADDGVMPQTIEAINHSKAANVPIIVAINKIDKPGANPERVIGELAEHGVMSTAWGGDSEFVEISAKFNQNIEELLETVLLVAEIQELKADPTVRAIGTVIEARLDKGKGAVATLLVQQGTLNVQDPIVVGNTFGRVRAMTNDLGRRVKVAGPSTPVSITGLNEAPMAGDHFAVYEDEKSARAAGEERAKRALMKQRQATQRVSLENLFDTLKAGELKSVNVIIKADVQGSVEALSASLQKIDVEGVKVTIVHSAVGAINESDVTLAEASNAFIVGFNVRPTPQARQQAEADDVEIRLHSIIYKVIEEMEEAMKGMLDPEFEEKVIGEAVIRETFKVSKVGTIGGFMVINGKVARDSKVRVIRDGVVIYDGELASLKHYKDDVKEVTNGREGGLMIDCYNDIKMDDVIEAYVMEEIKR</sequence>
<accession>C1CJ39</accession>